<protein>
    <recommendedName>
        <fullName evidence="1">Glutamate racemase</fullName>
        <ecNumber evidence="1">5.1.1.3</ecNumber>
    </recommendedName>
</protein>
<feature type="chain" id="PRO_0000095448" description="Glutamate racemase">
    <location>
        <begin position="1"/>
        <end position="254"/>
    </location>
</feature>
<feature type="active site" description="Proton donor/acceptor" evidence="1">
    <location>
        <position position="70"/>
    </location>
</feature>
<feature type="active site" description="Proton donor/acceptor" evidence="1">
    <location>
        <position position="178"/>
    </location>
</feature>
<feature type="binding site" evidence="1">
    <location>
        <begin position="7"/>
        <end position="8"/>
    </location>
    <ligand>
        <name>substrate</name>
    </ligand>
</feature>
<feature type="binding site" evidence="1">
    <location>
        <begin position="39"/>
        <end position="40"/>
    </location>
    <ligand>
        <name>substrate</name>
    </ligand>
</feature>
<feature type="binding site" evidence="1">
    <location>
        <begin position="71"/>
        <end position="72"/>
    </location>
    <ligand>
        <name>substrate</name>
    </ligand>
</feature>
<feature type="binding site" evidence="1">
    <location>
        <begin position="179"/>
        <end position="180"/>
    </location>
    <ligand>
        <name>substrate</name>
    </ligand>
</feature>
<sequence length="254" mass="28101">MKIGIFDSGAGGMTVLKAIREAYPNVDVVYLGDTARVPYGIRSKETIVRYSKECANFLKDKGVDLLVVACNTASAYALEELKREFPFPVFGVIEPGVKEALRKSKTKRIGVIGTQATIKSGAYQEALKRAGAEVYSKACPLFVPLVEEGMIEGEIPKKVVEHYLKDFKGKVDTLILGCTHYPLLKREIQNFLEGVNVIDSSRATAKSLKDFVKNEGSGSLELYFTDRSQNLERLIKLILGEEVEPKITSEVFVL</sequence>
<proteinExistence type="inferred from homology"/>
<reference key="1">
    <citation type="journal article" date="1998" name="Nature">
        <title>The complete genome of the hyperthermophilic bacterium Aquifex aeolicus.</title>
        <authorList>
            <person name="Deckert G."/>
            <person name="Warren P.V."/>
            <person name="Gaasterland T."/>
            <person name="Young W.G."/>
            <person name="Lenox A.L."/>
            <person name="Graham D.E."/>
            <person name="Overbeek R."/>
            <person name="Snead M.A."/>
            <person name="Keller M."/>
            <person name="Aujay M."/>
            <person name="Huber R."/>
            <person name="Feldman R.A."/>
            <person name="Short J.M."/>
            <person name="Olsen G.J."/>
            <person name="Swanson R.V."/>
        </authorList>
    </citation>
    <scope>NUCLEOTIDE SEQUENCE [LARGE SCALE GENOMIC DNA]</scope>
    <source>
        <strain>VF5</strain>
    </source>
</reference>
<keyword id="KW-0133">Cell shape</keyword>
<keyword id="KW-0961">Cell wall biogenesis/degradation</keyword>
<keyword id="KW-0413">Isomerase</keyword>
<keyword id="KW-0573">Peptidoglycan synthesis</keyword>
<keyword id="KW-1185">Reference proteome</keyword>
<name>MURI_AQUAE</name>
<gene>
    <name evidence="1" type="primary">murI</name>
    <name type="ordered locus">aq_325</name>
</gene>
<organism>
    <name type="scientific">Aquifex aeolicus (strain VF5)</name>
    <dbReference type="NCBI Taxonomy" id="224324"/>
    <lineage>
        <taxon>Bacteria</taxon>
        <taxon>Pseudomonadati</taxon>
        <taxon>Aquificota</taxon>
        <taxon>Aquificia</taxon>
        <taxon>Aquificales</taxon>
        <taxon>Aquificaceae</taxon>
        <taxon>Aquifex</taxon>
    </lineage>
</organism>
<comment type="function">
    <text evidence="1">Provides the (R)-glutamate required for cell wall biosynthesis.</text>
</comment>
<comment type="catalytic activity">
    <reaction evidence="1">
        <text>L-glutamate = D-glutamate</text>
        <dbReference type="Rhea" id="RHEA:12813"/>
        <dbReference type="ChEBI" id="CHEBI:29985"/>
        <dbReference type="ChEBI" id="CHEBI:29986"/>
        <dbReference type="EC" id="5.1.1.3"/>
    </reaction>
</comment>
<comment type="pathway">
    <text evidence="1">Cell wall biogenesis; peptidoglycan biosynthesis.</text>
</comment>
<comment type="similarity">
    <text evidence="1">Belongs to the aspartate/glutamate racemases family.</text>
</comment>
<evidence type="ECO:0000255" key="1">
    <source>
        <dbReference type="HAMAP-Rule" id="MF_00258"/>
    </source>
</evidence>
<accession>O66662</accession>
<dbReference type="EC" id="5.1.1.3" evidence="1"/>
<dbReference type="EMBL" id="AE000657">
    <property type="protein sequence ID" value="AAC06621.1"/>
    <property type="molecule type" value="Genomic_DNA"/>
</dbReference>
<dbReference type="PIR" id="B70329">
    <property type="entry name" value="B70329"/>
</dbReference>
<dbReference type="RefSeq" id="NP_213222.1">
    <property type="nucleotide sequence ID" value="NC_000918.1"/>
</dbReference>
<dbReference type="RefSeq" id="WP_010880160.1">
    <property type="nucleotide sequence ID" value="NC_000918.1"/>
</dbReference>
<dbReference type="SMR" id="O66662"/>
<dbReference type="FunCoup" id="O66662">
    <property type="interactions" value="190"/>
</dbReference>
<dbReference type="STRING" id="224324.aq_325"/>
<dbReference type="EnsemblBacteria" id="AAC06621">
    <property type="protein sequence ID" value="AAC06621"/>
    <property type="gene ID" value="aq_325"/>
</dbReference>
<dbReference type="KEGG" id="aae:aq_325"/>
<dbReference type="PATRIC" id="fig|224324.8.peg.262"/>
<dbReference type="eggNOG" id="COG0796">
    <property type="taxonomic scope" value="Bacteria"/>
</dbReference>
<dbReference type="HOGENOM" id="CLU_052344_0_2_0"/>
<dbReference type="InParanoid" id="O66662"/>
<dbReference type="OrthoDB" id="9801055at2"/>
<dbReference type="UniPathway" id="UPA00219"/>
<dbReference type="Proteomes" id="UP000000798">
    <property type="component" value="Chromosome"/>
</dbReference>
<dbReference type="GO" id="GO:0008881">
    <property type="term" value="F:glutamate racemase activity"/>
    <property type="evidence" value="ECO:0000318"/>
    <property type="project" value="GO_Central"/>
</dbReference>
<dbReference type="GO" id="GO:0071555">
    <property type="term" value="P:cell wall organization"/>
    <property type="evidence" value="ECO:0007669"/>
    <property type="project" value="UniProtKB-KW"/>
</dbReference>
<dbReference type="GO" id="GO:0009252">
    <property type="term" value="P:peptidoglycan biosynthetic process"/>
    <property type="evidence" value="ECO:0000318"/>
    <property type="project" value="GO_Central"/>
</dbReference>
<dbReference type="GO" id="GO:0008360">
    <property type="term" value="P:regulation of cell shape"/>
    <property type="evidence" value="ECO:0007669"/>
    <property type="project" value="UniProtKB-KW"/>
</dbReference>
<dbReference type="FunFam" id="3.40.50.1860:FF:000002">
    <property type="entry name" value="Glutamate racemase"/>
    <property type="match status" value="1"/>
</dbReference>
<dbReference type="Gene3D" id="3.40.50.1860">
    <property type="match status" value="2"/>
</dbReference>
<dbReference type="HAMAP" id="MF_00258">
    <property type="entry name" value="Glu_racemase"/>
    <property type="match status" value="1"/>
</dbReference>
<dbReference type="InterPro" id="IPR015942">
    <property type="entry name" value="Asp/Glu/hydantoin_racemase"/>
</dbReference>
<dbReference type="InterPro" id="IPR001920">
    <property type="entry name" value="Asp/Glu_race"/>
</dbReference>
<dbReference type="InterPro" id="IPR018187">
    <property type="entry name" value="Asp/Glu_racemase_AS_1"/>
</dbReference>
<dbReference type="InterPro" id="IPR033134">
    <property type="entry name" value="Asp/Glu_racemase_AS_2"/>
</dbReference>
<dbReference type="InterPro" id="IPR004391">
    <property type="entry name" value="Glu_race"/>
</dbReference>
<dbReference type="NCBIfam" id="TIGR00067">
    <property type="entry name" value="glut_race"/>
    <property type="match status" value="1"/>
</dbReference>
<dbReference type="PANTHER" id="PTHR21198">
    <property type="entry name" value="GLUTAMATE RACEMASE"/>
    <property type="match status" value="1"/>
</dbReference>
<dbReference type="PANTHER" id="PTHR21198:SF2">
    <property type="entry name" value="GLUTAMATE RACEMASE"/>
    <property type="match status" value="1"/>
</dbReference>
<dbReference type="Pfam" id="PF01177">
    <property type="entry name" value="Asp_Glu_race"/>
    <property type="match status" value="1"/>
</dbReference>
<dbReference type="SUPFAM" id="SSF53681">
    <property type="entry name" value="Aspartate/glutamate racemase"/>
    <property type="match status" value="2"/>
</dbReference>
<dbReference type="PROSITE" id="PS00923">
    <property type="entry name" value="ASP_GLU_RACEMASE_1"/>
    <property type="match status" value="1"/>
</dbReference>
<dbReference type="PROSITE" id="PS00924">
    <property type="entry name" value="ASP_GLU_RACEMASE_2"/>
    <property type="match status" value="1"/>
</dbReference>